<proteinExistence type="inferred from homology"/>
<name>DCD_PSEAB</name>
<protein>
    <recommendedName>
        <fullName evidence="1">dCTP deaminase</fullName>
        <ecNumber evidence="1">3.5.4.13</ecNumber>
    </recommendedName>
    <alternativeName>
        <fullName evidence="1">Deoxycytidine triphosphate deaminase</fullName>
    </alternativeName>
</protein>
<keyword id="KW-0378">Hydrolase</keyword>
<keyword id="KW-0546">Nucleotide metabolism</keyword>
<keyword id="KW-0547">Nucleotide-binding</keyword>
<organism>
    <name type="scientific">Pseudomonas aeruginosa (strain UCBPP-PA14)</name>
    <dbReference type="NCBI Taxonomy" id="208963"/>
    <lineage>
        <taxon>Bacteria</taxon>
        <taxon>Pseudomonadati</taxon>
        <taxon>Pseudomonadota</taxon>
        <taxon>Gammaproteobacteria</taxon>
        <taxon>Pseudomonadales</taxon>
        <taxon>Pseudomonadaceae</taxon>
        <taxon>Pseudomonas</taxon>
    </lineage>
</organism>
<gene>
    <name evidence="1" type="primary">dcd</name>
    <name type="ordered locus">PA14_19090</name>
</gene>
<evidence type="ECO:0000255" key="1">
    <source>
        <dbReference type="HAMAP-Rule" id="MF_00146"/>
    </source>
</evidence>
<dbReference type="EC" id="3.5.4.13" evidence="1"/>
<dbReference type="EMBL" id="CP000438">
    <property type="protein sequence ID" value="ABJ12735.1"/>
    <property type="molecule type" value="Genomic_DNA"/>
</dbReference>
<dbReference type="RefSeq" id="WP_003092017.1">
    <property type="nucleotide sequence ID" value="NZ_CP034244.1"/>
</dbReference>
<dbReference type="SMR" id="Q02QW9"/>
<dbReference type="GeneID" id="77220012"/>
<dbReference type="KEGG" id="pau:PA14_19090"/>
<dbReference type="PseudoCAP" id="PA14_19090"/>
<dbReference type="HOGENOM" id="CLU_087476_4_0_6"/>
<dbReference type="BioCyc" id="PAER208963:G1G74-1571-MONOMER"/>
<dbReference type="UniPathway" id="UPA00610">
    <property type="reaction ID" value="UER00665"/>
</dbReference>
<dbReference type="Proteomes" id="UP000000653">
    <property type="component" value="Chromosome"/>
</dbReference>
<dbReference type="GO" id="GO:0008829">
    <property type="term" value="F:dCTP deaminase activity"/>
    <property type="evidence" value="ECO:0007669"/>
    <property type="project" value="UniProtKB-UniRule"/>
</dbReference>
<dbReference type="GO" id="GO:0000166">
    <property type="term" value="F:nucleotide binding"/>
    <property type="evidence" value="ECO:0007669"/>
    <property type="project" value="UniProtKB-KW"/>
</dbReference>
<dbReference type="GO" id="GO:0006226">
    <property type="term" value="P:dUMP biosynthetic process"/>
    <property type="evidence" value="ECO:0007669"/>
    <property type="project" value="UniProtKB-UniPathway"/>
</dbReference>
<dbReference type="GO" id="GO:0006229">
    <property type="term" value="P:dUTP biosynthetic process"/>
    <property type="evidence" value="ECO:0007669"/>
    <property type="project" value="UniProtKB-UniRule"/>
</dbReference>
<dbReference type="GO" id="GO:0015949">
    <property type="term" value="P:nucleobase-containing small molecule interconversion"/>
    <property type="evidence" value="ECO:0007669"/>
    <property type="project" value="TreeGrafter"/>
</dbReference>
<dbReference type="CDD" id="cd07557">
    <property type="entry name" value="trimeric_dUTPase"/>
    <property type="match status" value="1"/>
</dbReference>
<dbReference type="FunFam" id="2.70.40.10:FF:000001">
    <property type="entry name" value="dCTP deaminase"/>
    <property type="match status" value="1"/>
</dbReference>
<dbReference type="Gene3D" id="2.70.40.10">
    <property type="match status" value="1"/>
</dbReference>
<dbReference type="HAMAP" id="MF_00146">
    <property type="entry name" value="dCTP_deaminase"/>
    <property type="match status" value="1"/>
</dbReference>
<dbReference type="InterPro" id="IPR011962">
    <property type="entry name" value="dCTP_deaminase"/>
</dbReference>
<dbReference type="InterPro" id="IPR036157">
    <property type="entry name" value="dUTPase-like_sf"/>
</dbReference>
<dbReference type="InterPro" id="IPR033704">
    <property type="entry name" value="dUTPase_trimeric"/>
</dbReference>
<dbReference type="NCBIfam" id="TIGR02274">
    <property type="entry name" value="dCTP_deam"/>
    <property type="match status" value="1"/>
</dbReference>
<dbReference type="PANTHER" id="PTHR42680">
    <property type="entry name" value="DCTP DEAMINASE"/>
    <property type="match status" value="1"/>
</dbReference>
<dbReference type="PANTHER" id="PTHR42680:SF3">
    <property type="entry name" value="DCTP DEAMINASE"/>
    <property type="match status" value="1"/>
</dbReference>
<dbReference type="Pfam" id="PF22769">
    <property type="entry name" value="DCD"/>
    <property type="match status" value="1"/>
</dbReference>
<dbReference type="SUPFAM" id="SSF51283">
    <property type="entry name" value="dUTPase-like"/>
    <property type="match status" value="1"/>
</dbReference>
<comment type="function">
    <text evidence="1">Catalyzes the deamination of dCTP to dUTP.</text>
</comment>
<comment type="catalytic activity">
    <reaction evidence="1">
        <text>dCTP + H2O + H(+) = dUTP + NH4(+)</text>
        <dbReference type="Rhea" id="RHEA:22680"/>
        <dbReference type="ChEBI" id="CHEBI:15377"/>
        <dbReference type="ChEBI" id="CHEBI:15378"/>
        <dbReference type="ChEBI" id="CHEBI:28938"/>
        <dbReference type="ChEBI" id="CHEBI:61481"/>
        <dbReference type="ChEBI" id="CHEBI:61555"/>
        <dbReference type="EC" id="3.5.4.13"/>
    </reaction>
</comment>
<comment type="pathway">
    <text evidence="1">Pyrimidine metabolism; dUMP biosynthesis; dUMP from dCTP (dUTP route): step 1/2.</text>
</comment>
<comment type="subunit">
    <text evidence="1">Homotrimer.</text>
</comment>
<comment type="similarity">
    <text evidence="1">Belongs to the dCTP deaminase family.</text>
</comment>
<sequence>MTIKSDKWIRRMAQEHGMIEPFVERQVRGADDSRVISYGVSSYGYDVRCAAEFKVFTNIHSAVVDPKNFDEKSFVDINSDVCIIPPNSFALARTVEYFRIPRDVLTICLGKSTYARCGIIVNVTPLEPEWEGHVTLEFSNTTNLPAKIYANEGVAQMLFLQSDEACEVSYKDRGGKYQGQRGVTLPKA</sequence>
<accession>Q02QW9</accession>
<reference key="1">
    <citation type="journal article" date="2006" name="Genome Biol.">
        <title>Genomic analysis reveals that Pseudomonas aeruginosa virulence is combinatorial.</title>
        <authorList>
            <person name="Lee D.G."/>
            <person name="Urbach J.M."/>
            <person name="Wu G."/>
            <person name="Liberati N.T."/>
            <person name="Feinbaum R.L."/>
            <person name="Miyata S."/>
            <person name="Diggins L.T."/>
            <person name="He J."/>
            <person name="Saucier M."/>
            <person name="Deziel E."/>
            <person name="Friedman L."/>
            <person name="Li L."/>
            <person name="Grills G."/>
            <person name="Montgomery K."/>
            <person name="Kucherlapati R."/>
            <person name="Rahme L.G."/>
            <person name="Ausubel F.M."/>
        </authorList>
    </citation>
    <scope>NUCLEOTIDE SEQUENCE [LARGE SCALE GENOMIC DNA]</scope>
    <source>
        <strain>UCBPP-PA14</strain>
    </source>
</reference>
<feature type="chain" id="PRO_1000009784" description="dCTP deaminase">
    <location>
        <begin position="1"/>
        <end position="188"/>
    </location>
</feature>
<feature type="active site" description="Proton donor/acceptor" evidence="1">
    <location>
        <position position="137"/>
    </location>
</feature>
<feature type="binding site" evidence="1">
    <location>
        <begin position="111"/>
        <end position="116"/>
    </location>
    <ligand>
        <name>dCTP</name>
        <dbReference type="ChEBI" id="CHEBI:61481"/>
    </ligand>
</feature>
<feature type="binding site" evidence="1">
    <location>
        <begin position="135"/>
        <end position="137"/>
    </location>
    <ligand>
        <name>dCTP</name>
        <dbReference type="ChEBI" id="CHEBI:61481"/>
    </ligand>
</feature>
<feature type="binding site" evidence="1">
    <location>
        <position position="156"/>
    </location>
    <ligand>
        <name>dCTP</name>
        <dbReference type="ChEBI" id="CHEBI:61481"/>
    </ligand>
</feature>
<feature type="binding site" evidence="1">
    <location>
        <position position="170"/>
    </location>
    <ligand>
        <name>dCTP</name>
        <dbReference type="ChEBI" id="CHEBI:61481"/>
    </ligand>
</feature>
<feature type="binding site" evidence="1">
    <location>
        <position position="180"/>
    </location>
    <ligand>
        <name>dCTP</name>
        <dbReference type="ChEBI" id="CHEBI:61481"/>
    </ligand>
</feature>